<organism>
    <name type="scientific">Salmonella newport (strain SL254)</name>
    <dbReference type="NCBI Taxonomy" id="423368"/>
    <lineage>
        <taxon>Bacteria</taxon>
        <taxon>Pseudomonadati</taxon>
        <taxon>Pseudomonadota</taxon>
        <taxon>Gammaproteobacteria</taxon>
        <taxon>Enterobacterales</taxon>
        <taxon>Enterobacteriaceae</taxon>
        <taxon>Salmonella</taxon>
    </lineage>
</organism>
<comment type="catalytic activity">
    <reaction evidence="1">
        <text>D-arabinose 5-phosphate + phosphoenolpyruvate + H2O = 3-deoxy-alpha-D-manno-2-octulosonate-8-phosphate + phosphate</text>
        <dbReference type="Rhea" id="RHEA:14053"/>
        <dbReference type="ChEBI" id="CHEBI:15377"/>
        <dbReference type="ChEBI" id="CHEBI:43474"/>
        <dbReference type="ChEBI" id="CHEBI:57693"/>
        <dbReference type="ChEBI" id="CHEBI:58702"/>
        <dbReference type="ChEBI" id="CHEBI:85985"/>
        <dbReference type="EC" id="2.5.1.55"/>
    </reaction>
</comment>
<comment type="pathway">
    <text evidence="1">Carbohydrate biosynthesis; 3-deoxy-D-manno-octulosonate biosynthesis; 3-deoxy-D-manno-octulosonate from D-ribulose 5-phosphate: step 2/3.</text>
</comment>
<comment type="pathway">
    <text evidence="1">Bacterial outer membrane biogenesis; lipopolysaccharide biosynthesis.</text>
</comment>
<comment type="subcellular location">
    <subcellularLocation>
        <location evidence="1">Cytoplasm</location>
    </subcellularLocation>
</comment>
<comment type="similarity">
    <text evidence="1">Belongs to the KdsA family.</text>
</comment>
<accession>B4SUF8</accession>
<gene>
    <name evidence="1" type="primary">kdsA</name>
    <name type="ordered locus">SNSL254_A1903</name>
</gene>
<evidence type="ECO:0000255" key="1">
    <source>
        <dbReference type="HAMAP-Rule" id="MF_00056"/>
    </source>
</evidence>
<proteinExistence type="inferred from homology"/>
<name>KDSA_SALNS</name>
<reference key="1">
    <citation type="journal article" date="2011" name="J. Bacteriol.">
        <title>Comparative genomics of 28 Salmonella enterica isolates: evidence for CRISPR-mediated adaptive sublineage evolution.</title>
        <authorList>
            <person name="Fricke W.F."/>
            <person name="Mammel M.K."/>
            <person name="McDermott P.F."/>
            <person name="Tartera C."/>
            <person name="White D.G."/>
            <person name="Leclerc J.E."/>
            <person name="Ravel J."/>
            <person name="Cebula T.A."/>
        </authorList>
    </citation>
    <scope>NUCLEOTIDE SEQUENCE [LARGE SCALE GENOMIC DNA]</scope>
    <source>
        <strain>SL254</strain>
    </source>
</reference>
<protein>
    <recommendedName>
        <fullName evidence="1">2-dehydro-3-deoxyphosphooctonate aldolase</fullName>
        <ecNumber evidence="1">2.5.1.55</ecNumber>
    </recommendedName>
    <alternativeName>
        <fullName evidence="1">3-deoxy-D-manno-octulosonic acid 8-phosphate synthase</fullName>
    </alternativeName>
    <alternativeName>
        <fullName evidence="1">KDO-8-phosphate synthase</fullName>
        <shortName evidence="1">KDO 8-P synthase</shortName>
        <shortName evidence="1">KDOPS</shortName>
    </alternativeName>
    <alternativeName>
        <fullName evidence="1">Phospho-2-dehydro-3-deoxyoctonate aldolase</fullName>
    </alternativeName>
</protein>
<dbReference type="EC" id="2.5.1.55" evidence="1"/>
<dbReference type="EMBL" id="CP001113">
    <property type="protein sequence ID" value="ACF64898.1"/>
    <property type="molecule type" value="Genomic_DNA"/>
</dbReference>
<dbReference type="RefSeq" id="WP_000811046.1">
    <property type="nucleotide sequence ID" value="NZ_CCMR01000003.1"/>
</dbReference>
<dbReference type="SMR" id="B4SUF8"/>
<dbReference type="KEGG" id="see:SNSL254_A1903"/>
<dbReference type="HOGENOM" id="CLU_036666_0_0_6"/>
<dbReference type="UniPathway" id="UPA00030"/>
<dbReference type="UniPathway" id="UPA00357">
    <property type="reaction ID" value="UER00474"/>
</dbReference>
<dbReference type="Proteomes" id="UP000008824">
    <property type="component" value="Chromosome"/>
</dbReference>
<dbReference type="GO" id="GO:0005737">
    <property type="term" value="C:cytoplasm"/>
    <property type="evidence" value="ECO:0007669"/>
    <property type="project" value="UniProtKB-SubCell"/>
</dbReference>
<dbReference type="GO" id="GO:0008676">
    <property type="term" value="F:3-deoxy-8-phosphooctulonate synthase activity"/>
    <property type="evidence" value="ECO:0007669"/>
    <property type="project" value="UniProtKB-UniRule"/>
</dbReference>
<dbReference type="GO" id="GO:0019294">
    <property type="term" value="P:keto-3-deoxy-D-manno-octulosonic acid biosynthetic process"/>
    <property type="evidence" value="ECO:0007669"/>
    <property type="project" value="UniProtKB-UniRule"/>
</dbReference>
<dbReference type="FunFam" id="3.20.20.70:FF:000058">
    <property type="entry name" value="2-dehydro-3-deoxyphosphooctonate aldolase"/>
    <property type="match status" value="1"/>
</dbReference>
<dbReference type="Gene3D" id="3.20.20.70">
    <property type="entry name" value="Aldolase class I"/>
    <property type="match status" value="1"/>
</dbReference>
<dbReference type="HAMAP" id="MF_00056">
    <property type="entry name" value="KDO8P_synth"/>
    <property type="match status" value="1"/>
</dbReference>
<dbReference type="InterPro" id="IPR013785">
    <property type="entry name" value="Aldolase_TIM"/>
</dbReference>
<dbReference type="InterPro" id="IPR006218">
    <property type="entry name" value="DAHP1/KDSA"/>
</dbReference>
<dbReference type="InterPro" id="IPR006269">
    <property type="entry name" value="KDO8P_synthase"/>
</dbReference>
<dbReference type="NCBIfam" id="TIGR01362">
    <property type="entry name" value="KDO8P_synth"/>
    <property type="match status" value="1"/>
</dbReference>
<dbReference type="NCBIfam" id="NF003543">
    <property type="entry name" value="PRK05198.1"/>
    <property type="match status" value="1"/>
</dbReference>
<dbReference type="NCBIfam" id="NF009109">
    <property type="entry name" value="PRK12457.1"/>
    <property type="match status" value="1"/>
</dbReference>
<dbReference type="PANTHER" id="PTHR21057">
    <property type="entry name" value="PHOSPHO-2-DEHYDRO-3-DEOXYHEPTONATE ALDOLASE"/>
    <property type="match status" value="1"/>
</dbReference>
<dbReference type="Pfam" id="PF00793">
    <property type="entry name" value="DAHP_synth_1"/>
    <property type="match status" value="1"/>
</dbReference>
<dbReference type="SUPFAM" id="SSF51569">
    <property type="entry name" value="Aldolase"/>
    <property type="match status" value="1"/>
</dbReference>
<sequence>MKQKVVNIGDIKVANDLPFVLFGGMNVLESRDLAMRICEHYVTVTQKLGIPYVFKASFDKANRSSIHSYRGPGLEEGMKIFQELKQTFGVKVITDVHEASQAQPVADVVDVIQLPAFLARQTDLVEAMAKTGAVINVKKPQFVSPGQMGNIVDKFHEGGNDKVILCDRGANFGYDNLVVDMLGFSVMKKVSGNSPVIFDVTHALQCRDPFGAASGGRRGQVTELARAGMAVGLAGLFLESHPDPANAKCDGPSALPLAKLEQFLTQIKAIDDLVKSFDELDTEN</sequence>
<feature type="chain" id="PRO_1000091834" description="2-dehydro-3-deoxyphosphooctonate aldolase">
    <location>
        <begin position="1"/>
        <end position="284"/>
    </location>
</feature>
<keyword id="KW-0963">Cytoplasm</keyword>
<keyword id="KW-0448">Lipopolysaccharide biosynthesis</keyword>
<keyword id="KW-0808">Transferase</keyword>